<comment type="cofactor">
    <cofactor evidence="4 5 6">
        <name>Zn(2+)</name>
        <dbReference type="ChEBI" id="CHEBI:29105"/>
    </cofactor>
    <text evidence="4 5 6">Bind 1 Zn(2+) per subunit.</text>
</comment>
<comment type="subunit">
    <text evidence="2">Part of the 50S ribosomal subunit.</text>
</comment>
<comment type="similarity">
    <text evidence="1">Belongs to the eukaryotic ribosomal protein eL40 family.</text>
</comment>
<evidence type="ECO:0000255" key="1">
    <source>
        <dbReference type="HAMAP-Rule" id="MF_00788"/>
    </source>
</evidence>
<evidence type="ECO:0000269" key="2">
    <source>
    </source>
</evidence>
<evidence type="ECO:0000305" key="3"/>
<evidence type="ECO:0007744" key="4">
    <source>
        <dbReference type="PDB" id="6SKF"/>
    </source>
</evidence>
<evidence type="ECO:0007744" key="5">
    <source>
        <dbReference type="PDB" id="6SKG"/>
    </source>
</evidence>
<evidence type="ECO:0007744" key="6">
    <source>
        <dbReference type="PDB" id="6TH6"/>
    </source>
</evidence>
<name>RL40_THEKO</name>
<feature type="chain" id="PRO_0000138789" description="Large ribosomal subunit protein eL40">
    <location>
        <begin position="1"/>
        <end position="51"/>
    </location>
</feature>
<feature type="binding site" evidence="4 5">
    <location>
        <position position="17"/>
    </location>
    <ligand>
        <name>Zn(2+)</name>
        <dbReference type="ChEBI" id="CHEBI:29105"/>
    </ligand>
</feature>
<feature type="binding site" evidence="4 5 6">
    <location>
        <position position="20"/>
    </location>
    <ligand>
        <name>Zn(2+)</name>
        <dbReference type="ChEBI" id="CHEBI:29105"/>
    </ligand>
</feature>
<feature type="binding site" evidence="3">
    <location>
        <position position="31"/>
    </location>
    <ligand>
        <name>Zn(2+)</name>
        <dbReference type="ChEBI" id="CHEBI:29105"/>
    </ligand>
</feature>
<feature type="binding site" evidence="4 5 6">
    <location>
        <position position="34"/>
    </location>
    <ligand>
        <name>Zn(2+)</name>
        <dbReference type="ChEBI" id="CHEBI:29105"/>
    </ligand>
</feature>
<proteinExistence type="evidence at protein level"/>
<protein>
    <recommendedName>
        <fullName evidence="1">Large ribosomal subunit protein eL40</fullName>
    </recommendedName>
    <alternativeName>
        <fullName evidence="3">50S ribosomal protein L40e</fullName>
    </alternativeName>
</protein>
<accession>Q5JJD3</accession>
<keyword id="KW-0002">3D-structure</keyword>
<keyword id="KW-0479">Metal-binding</keyword>
<keyword id="KW-1185">Reference proteome</keyword>
<keyword id="KW-0687">Ribonucleoprotein</keyword>
<keyword id="KW-0689">Ribosomal protein</keyword>
<keyword id="KW-0862">Zinc</keyword>
<organism>
    <name type="scientific">Thermococcus kodakarensis (strain ATCC BAA-918 / JCM 12380 / KOD1)</name>
    <name type="common">Pyrococcus kodakaraensis (strain KOD1)</name>
    <dbReference type="NCBI Taxonomy" id="69014"/>
    <lineage>
        <taxon>Archaea</taxon>
        <taxon>Methanobacteriati</taxon>
        <taxon>Methanobacteriota</taxon>
        <taxon>Thermococci</taxon>
        <taxon>Thermococcales</taxon>
        <taxon>Thermococcaceae</taxon>
        <taxon>Thermococcus</taxon>
    </lineage>
</organism>
<sequence>MARFPEAEARIFRKLVCMRCGATNPWGAKKCRKCGYKGLRPKAREPRGGGR</sequence>
<gene>
    <name evidence="1" type="primary">rpl40e</name>
    <name type="ordered locus">TK1495</name>
</gene>
<reference key="1">
    <citation type="journal article" date="2005" name="Genome Res.">
        <title>Complete genome sequence of the hyperthermophilic archaeon Thermococcus kodakaraensis KOD1 and comparison with Pyrococcus genomes.</title>
        <authorList>
            <person name="Fukui T."/>
            <person name="Atomi H."/>
            <person name="Kanai T."/>
            <person name="Matsumi R."/>
            <person name="Fujiwara S."/>
            <person name="Imanaka T."/>
        </authorList>
    </citation>
    <scope>NUCLEOTIDE SEQUENCE [LARGE SCALE GENOMIC DNA]</scope>
    <source>
        <strain>ATCC BAA-918 / JCM 12380 / KOD1</strain>
    </source>
</reference>
<reference evidence="4 5 6" key="2">
    <citation type="journal article" date="2020" name="Nature">
        <title>Dynamic RNA acetylation revealed by quantitative cross-evolutionary mapping.</title>
        <authorList>
            <person name="Sas-Chen A."/>
            <person name="Thomas J.M."/>
            <person name="Matzov D."/>
            <person name="Taoka M."/>
            <person name="Nance K.D."/>
            <person name="Nir R."/>
            <person name="Bryson K.M."/>
            <person name="Shachar R."/>
            <person name="Liman G.L.S."/>
            <person name="Burkhart B.W."/>
            <person name="Gamage S.T."/>
            <person name="Nobe Y."/>
            <person name="Briney C.A."/>
            <person name="Levy M.J."/>
            <person name="Fuchs R.T."/>
            <person name="Robb G.B."/>
            <person name="Hartmann J."/>
            <person name="Sharma S."/>
            <person name="Lin Q."/>
            <person name="Florens L."/>
            <person name="Washburn M.P."/>
            <person name="Isobe T."/>
            <person name="Santangelo T.J."/>
            <person name="Shalev-Benami M."/>
            <person name="Meier J.L."/>
            <person name="Schwartz S."/>
        </authorList>
    </citation>
    <scope>STRUCTURE BY ELECTRON MICROSCOPY (2.55 ANGSTROMS) IN 70S RIBOSOME IN COMPLEX WITH ZN(2+)</scope>
    <scope>SUBUNIT</scope>
    <source>
        <strain>ATCC BAA-918 / TS559</strain>
    </source>
</reference>
<dbReference type="EMBL" id="AP006878">
    <property type="protein sequence ID" value="BAD85684.1"/>
    <property type="molecule type" value="Genomic_DNA"/>
</dbReference>
<dbReference type="RefSeq" id="WP_011250446.1">
    <property type="nucleotide sequence ID" value="NC_006624.1"/>
</dbReference>
<dbReference type="PDB" id="6SKF">
    <property type="method" value="EM"/>
    <property type="resolution" value="2.95 A"/>
    <property type="chains" value="Bj=1-51"/>
</dbReference>
<dbReference type="PDB" id="6SKG">
    <property type="method" value="EM"/>
    <property type="resolution" value="2.65 A"/>
    <property type="chains" value="Bj=1-51"/>
</dbReference>
<dbReference type="PDB" id="6TH6">
    <property type="method" value="EM"/>
    <property type="resolution" value="2.55 A"/>
    <property type="chains" value="Bj=1-51"/>
</dbReference>
<dbReference type="PDBsum" id="6SKF"/>
<dbReference type="PDBsum" id="6SKG"/>
<dbReference type="PDBsum" id="6TH6"/>
<dbReference type="EMDB" id="EMD-10223"/>
<dbReference type="EMDB" id="EMD-10224"/>
<dbReference type="EMDB" id="EMD-10503"/>
<dbReference type="SMR" id="Q5JJD3"/>
<dbReference type="FunCoup" id="Q5JJD3">
    <property type="interactions" value="67"/>
</dbReference>
<dbReference type="STRING" id="69014.TK1495"/>
<dbReference type="EnsemblBacteria" id="BAD85684">
    <property type="protein sequence ID" value="BAD85684"/>
    <property type="gene ID" value="TK1495"/>
</dbReference>
<dbReference type="GeneID" id="78448019"/>
<dbReference type="KEGG" id="tko:TK1495"/>
<dbReference type="PATRIC" id="fig|69014.16.peg.1455"/>
<dbReference type="eggNOG" id="arCOG04049">
    <property type="taxonomic scope" value="Archaea"/>
</dbReference>
<dbReference type="HOGENOM" id="CLU_205640_0_0_2"/>
<dbReference type="InParanoid" id="Q5JJD3"/>
<dbReference type="OrthoDB" id="45138at2157"/>
<dbReference type="PhylomeDB" id="Q5JJD3"/>
<dbReference type="Proteomes" id="UP000000536">
    <property type="component" value="Chromosome"/>
</dbReference>
<dbReference type="GO" id="GO:1990904">
    <property type="term" value="C:ribonucleoprotein complex"/>
    <property type="evidence" value="ECO:0007669"/>
    <property type="project" value="UniProtKB-KW"/>
</dbReference>
<dbReference type="GO" id="GO:0005840">
    <property type="term" value="C:ribosome"/>
    <property type="evidence" value="ECO:0007669"/>
    <property type="project" value="UniProtKB-KW"/>
</dbReference>
<dbReference type="GO" id="GO:0046872">
    <property type="term" value="F:metal ion binding"/>
    <property type="evidence" value="ECO:0007669"/>
    <property type="project" value="UniProtKB-KW"/>
</dbReference>
<dbReference type="GO" id="GO:0003735">
    <property type="term" value="F:structural constituent of ribosome"/>
    <property type="evidence" value="ECO:0007669"/>
    <property type="project" value="InterPro"/>
</dbReference>
<dbReference type="GO" id="GO:0006412">
    <property type="term" value="P:translation"/>
    <property type="evidence" value="ECO:0007669"/>
    <property type="project" value="UniProtKB-UniRule"/>
</dbReference>
<dbReference type="Gene3D" id="4.10.1060.50">
    <property type="match status" value="1"/>
</dbReference>
<dbReference type="HAMAP" id="MF_00788">
    <property type="entry name" value="Ribosomal_eL40"/>
    <property type="match status" value="1"/>
</dbReference>
<dbReference type="InterPro" id="IPR023657">
    <property type="entry name" value="Ribosomal_eL40_arc"/>
</dbReference>
<dbReference type="InterPro" id="IPR001975">
    <property type="entry name" value="Ribosomal_eL40_dom"/>
</dbReference>
<dbReference type="InterPro" id="IPR038587">
    <property type="entry name" value="Ribosomal_eL40_sf"/>
</dbReference>
<dbReference type="InterPro" id="IPR011332">
    <property type="entry name" value="Ribosomal_zn-bd"/>
</dbReference>
<dbReference type="NCBIfam" id="NF003161">
    <property type="entry name" value="PRK04136.1"/>
    <property type="match status" value="1"/>
</dbReference>
<dbReference type="PANTHER" id="PTHR39649">
    <property type="entry name" value="50S RIBOSOMAL PROTEIN L40E"/>
    <property type="match status" value="1"/>
</dbReference>
<dbReference type="PANTHER" id="PTHR39649:SF1">
    <property type="entry name" value="LARGE RIBOSOMAL SUBUNIT PROTEIN EL40"/>
    <property type="match status" value="1"/>
</dbReference>
<dbReference type="SMART" id="SM01377">
    <property type="entry name" value="Ribosomal_L40e"/>
    <property type="match status" value="1"/>
</dbReference>
<dbReference type="SUPFAM" id="SSF57829">
    <property type="entry name" value="Zn-binding ribosomal proteins"/>
    <property type="match status" value="1"/>
</dbReference>